<protein>
    <recommendedName>
        <fullName evidence="1">Photosystem I reaction center subunit IX</fullName>
    </recommendedName>
    <alternativeName>
        <fullName evidence="1">PSI-J</fullName>
    </alternativeName>
</protein>
<gene>
    <name evidence="1" type="primary">psaJ</name>
</gene>
<proteinExistence type="inferred from homology"/>
<dbReference type="EMBL" id="DQ864733">
    <property type="protein sequence ID" value="ABI49040.1"/>
    <property type="molecule type" value="Genomic_DNA"/>
</dbReference>
<dbReference type="RefSeq" id="YP_740495.1">
    <property type="nucleotide sequence ID" value="NC_008334.1"/>
</dbReference>
<dbReference type="SMR" id="Q09MF8"/>
<dbReference type="GeneID" id="4271120"/>
<dbReference type="KEGG" id="cit:4271120"/>
<dbReference type="OrthoDB" id="667171at71240"/>
<dbReference type="GO" id="GO:0009535">
    <property type="term" value="C:chloroplast thylakoid membrane"/>
    <property type="evidence" value="ECO:0007669"/>
    <property type="project" value="UniProtKB-SubCell"/>
</dbReference>
<dbReference type="GO" id="GO:0009522">
    <property type="term" value="C:photosystem I"/>
    <property type="evidence" value="ECO:0007669"/>
    <property type="project" value="UniProtKB-KW"/>
</dbReference>
<dbReference type="GO" id="GO:0015979">
    <property type="term" value="P:photosynthesis"/>
    <property type="evidence" value="ECO:0007669"/>
    <property type="project" value="UniProtKB-UniRule"/>
</dbReference>
<dbReference type="FunFam" id="1.20.5.510:FF:000001">
    <property type="entry name" value="Photosystem I reaction center subunit IX"/>
    <property type="match status" value="1"/>
</dbReference>
<dbReference type="Gene3D" id="1.20.5.510">
    <property type="entry name" value="Single helix bin"/>
    <property type="match status" value="1"/>
</dbReference>
<dbReference type="HAMAP" id="MF_00522">
    <property type="entry name" value="PSI_PsaJ"/>
    <property type="match status" value="1"/>
</dbReference>
<dbReference type="InterPro" id="IPR002615">
    <property type="entry name" value="PSI_PsaJ"/>
</dbReference>
<dbReference type="InterPro" id="IPR036062">
    <property type="entry name" value="PSI_PsaJ_sf"/>
</dbReference>
<dbReference type="PANTHER" id="PTHR36082">
    <property type="match status" value="1"/>
</dbReference>
<dbReference type="PANTHER" id="PTHR36082:SF2">
    <property type="entry name" value="PHOTOSYSTEM I REACTION CENTER SUBUNIT IX"/>
    <property type="match status" value="1"/>
</dbReference>
<dbReference type="Pfam" id="PF01701">
    <property type="entry name" value="PSI_PsaJ"/>
    <property type="match status" value="1"/>
</dbReference>
<dbReference type="SUPFAM" id="SSF81544">
    <property type="entry name" value="Subunit IX of photosystem I reaction centre, PsaJ"/>
    <property type="match status" value="1"/>
</dbReference>
<accession>Q09MF8</accession>
<feature type="chain" id="PRO_0000276051" description="Photosystem I reaction center subunit IX">
    <location>
        <begin position="1"/>
        <end position="44"/>
    </location>
</feature>
<feature type="transmembrane region" description="Helical" evidence="1">
    <location>
        <begin position="7"/>
        <end position="27"/>
    </location>
</feature>
<sequence>MRDLKTYLSVAPVLSTLWFGSLAGLLIEINRLFPDALTFPFFSF</sequence>
<geneLocation type="chloroplast"/>
<reference key="1">
    <citation type="journal article" date="2006" name="BMC Plant Biol.">
        <title>The complete chloroplast genome sequence of Citrus sinensis (L.) Osbeck var 'Ridge Pineapple': organization and phylogenetic relationships to other angiosperms.</title>
        <authorList>
            <person name="Bausher M.G."/>
            <person name="Singh N.D."/>
            <person name="Lee S.-B."/>
            <person name="Jansen R.K."/>
            <person name="Daniell H."/>
        </authorList>
    </citation>
    <scope>NUCLEOTIDE SEQUENCE [LARGE SCALE GENOMIC DNA]</scope>
    <source>
        <strain>cv. Osbeck var. Ridge Pineapple</strain>
    </source>
</reference>
<organism>
    <name type="scientific">Citrus sinensis</name>
    <name type="common">Sweet orange</name>
    <name type="synonym">Citrus aurantium var. sinensis</name>
    <dbReference type="NCBI Taxonomy" id="2711"/>
    <lineage>
        <taxon>Eukaryota</taxon>
        <taxon>Viridiplantae</taxon>
        <taxon>Streptophyta</taxon>
        <taxon>Embryophyta</taxon>
        <taxon>Tracheophyta</taxon>
        <taxon>Spermatophyta</taxon>
        <taxon>Magnoliopsida</taxon>
        <taxon>eudicotyledons</taxon>
        <taxon>Gunneridae</taxon>
        <taxon>Pentapetalae</taxon>
        <taxon>rosids</taxon>
        <taxon>malvids</taxon>
        <taxon>Sapindales</taxon>
        <taxon>Rutaceae</taxon>
        <taxon>Aurantioideae</taxon>
        <taxon>Citrus</taxon>
    </lineage>
</organism>
<evidence type="ECO:0000255" key="1">
    <source>
        <dbReference type="HAMAP-Rule" id="MF_00522"/>
    </source>
</evidence>
<name>PSAJ_CITSI</name>
<keyword id="KW-0150">Chloroplast</keyword>
<keyword id="KW-0472">Membrane</keyword>
<keyword id="KW-0602">Photosynthesis</keyword>
<keyword id="KW-0603">Photosystem I</keyword>
<keyword id="KW-0934">Plastid</keyword>
<keyword id="KW-0793">Thylakoid</keyword>
<keyword id="KW-0812">Transmembrane</keyword>
<keyword id="KW-1133">Transmembrane helix</keyword>
<comment type="function">
    <text evidence="1">May help in the organization of the PsaE and PsaF subunits.</text>
</comment>
<comment type="subcellular location">
    <subcellularLocation>
        <location evidence="1">Plastid</location>
        <location evidence="1">Chloroplast thylakoid membrane</location>
        <topology evidence="1">Single-pass membrane protein</topology>
    </subcellularLocation>
</comment>
<comment type="similarity">
    <text evidence="1">Belongs to the PsaJ family.</text>
</comment>